<dbReference type="EMBL" id="FM954972">
    <property type="protein sequence ID" value="CAV17599.1"/>
    <property type="molecule type" value="Genomic_DNA"/>
</dbReference>
<dbReference type="SMR" id="B7VJS5"/>
<dbReference type="STRING" id="575788.VS_0606"/>
<dbReference type="KEGG" id="vsp:VS_0606"/>
<dbReference type="eggNOG" id="COG1959">
    <property type="taxonomic scope" value="Bacteria"/>
</dbReference>
<dbReference type="HOGENOM" id="CLU_107144_0_0_6"/>
<dbReference type="Proteomes" id="UP000009100">
    <property type="component" value="Chromosome 1"/>
</dbReference>
<dbReference type="GO" id="GO:0005829">
    <property type="term" value="C:cytosol"/>
    <property type="evidence" value="ECO:0007669"/>
    <property type="project" value="TreeGrafter"/>
</dbReference>
<dbReference type="GO" id="GO:0051537">
    <property type="term" value="F:2 iron, 2 sulfur cluster binding"/>
    <property type="evidence" value="ECO:0007669"/>
    <property type="project" value="UniProtKB-KW"/>
</dbReference>
<dbReference type="GO" id="GO:0003700">
    <property type="term" value="F:DNA-binding transcription factor activity"/>
    <property type="evidence" value="ECO:0007669"/>
    <property type="project" value="UniProtKB-UniRule"/>
</dbReference>
<dbReference type="GO" id="GO:0003690">
    <property type="term" value="F:double-stranded DNA binding"/>
    <property type="evidence" value="ECO:0007669"/>
    <property type="project" value="UniProtKB-UniRule"/>
</dbReference>
<dbReference type="GO" id="GO:0005506">
    <property type="term" value="F:iron ion binding"/>
    <property type="evidence" value="ECO:0007669"/>
    <property type="project" value="UniProtKB-UniRule"/>
</dbReference>
<dbReference type="FunFam" id="1.10.10.10:FF:000026">
    <property type="entry name" value="HTH-type transcriptional regulator IscR"/>
    <property type="match status" value="1"/>
</dbReference>
<dbReference type="Gene3D" id="1.10.10.10">
    <property type="entry name" value="Winged helix-like DNA-binding domain superfamily/Winged helix DNA-binding domain"/>
    <property type="match status" value="1"/>
</dbReference>
<dbReference type="HAMAP" id="MF_01176">
    <property type="entry name" value="HTH_type_IscR"/>
    <property type="match status" value="1"/>
</dbReference>
<dbReference type="InterPro" id="IPR010242">
    <property type="entry name" value="TF_HTH_IscR"/>
</dbReference>
<dbReference type="InterPro" id="IPR030489">
    <property type="entry name" value="TR_Rrf2-type_CS"/>
</dbReference>
<dbReference type="InterPro" id="IPR000944">
    <property type="entry name" value="Tscrpt_reg_Rrf2"/>
</dbReference>
<dbReference type="InterPro" id="IPR036388">
    <property type="entry name" value="WH-like_DNA-bd_sf"/>
</dbReference>
<dbReference type="InterPro" id="IPR036390">
    <property type="entry name" value="WH_DNA-bd_sf"/>
</dbReference>
<dbReference type="NCBIfam" id="TIGR02010">
    <property type="entry name" value="IscR"/>
    <property type="match status" value="1"/>
</dbReference>
<dbReference type="NCBIfam" id="TIGR00738">
    <property type="entry name" value="rrf2_super"/>
    <property type="match status" value="1"/>
</dbReference>
<dbReference type="PANTHER" id="PTHR33221:SF5">
    <property type="entry name" value="HTH-TYPE TRANSCRIPTIONAL REGULATOR ISCR"/>
    <property type="match status" value="1"/>
</dbReference>
<dbReference type="PANTHER" id="PTHR33221">
    <property type="entry name" value="WINGED HELIX-TURN-HELIX TRANSCRIPTIONAL REGULATOR, RRF2 FAMILY"/>
    <property type="match status" value="1"/>
</dbReference>
<dbReference type="Pfam" id="PF02082">
    <property type="entry name" value="Rrf2"/>
    <property type="match status" value="1"/>
</dbReference>
<dbReference type="SUPFAM" id="SSF46785">
    <property type="entry name" value="Winged helix' DNA-binding domain"/>
    <property type="match status" value="1"/>
</dbReference>
<dbReference type="PROSITE" id="PS01332">
    <property type="entry name" value="HTH_RRF2_1"/>
    <property type="match status" value="1"/>
</dbReference>
<dbReference type="PROSITE" id="PS51197">
    <property type="entry name" value="HTH_RRF2_2"/>
    <property type="match status" value="1"/>
</dbReference>
<reference key="1">
    <citation type="submission" date="2009-02" db="EMBL/GenBank/DDBJ databases">
        <title>Vibrio splendidus str. LGP32 complete genome.</title>
        <authorList>
            <person name="Mazel D."/>
            <person name="Le Roux F."/>
        </authorList>
    </citation>
    <scope>NUCLEOTIDE SEQUENCE [LARGE SCALE GENOMIC DNA]</scope>
    <source>
        <strain>LGP32</strain>
    </source>
</reference>
<protein>
    <recommendedName>
        <fullName evidence="1">HTH-type transcriptional regulator IscR</fullName>
    </recommendedName>
</protein>
<gene>
    <name evidence="1" type="primary">iscR</name>
    <name type="ordered locus">VS_0606</name>
</gene>
<keyword id="KW-0001">2Fe-2S</keyword>
<keyword id="KW-0010">Activator</keyword>
<keyword id="KW-0238">DNA-binding</keyword>
<keyword id="KW-0408">Iron</keyword>
<keyword id="KW-0411">Iron-sulfur</keyword>
<keyword id="KW-0479">Metal-binding</keyword>
<keyword id="KW-0678">Repressor</keyword>
<keyword id="KW-0804">Transcription</keyword>
<keyword id="KW-0805">Transcription regulation</keyword>
<evidence type="ECO:0000255" key="1">
    <source>
        <dbReference type="HAMAP-Rule" id="MF_01176"/>
    </source>
</evidence>
<organism>
    <name type="scientific">Vibrio atlanticus (strain LGP32)</name>
    <name type="common">Vibrio splendidus (strain Mel32)</name>
    <dbReference type="NCBI Taxonomy" id="575788"/>
    <lineage>
        <taxon>Bacteria</taxon>
        <taxon>Pseudomonadati</taxon>
        <taxon>Pseudomonadota</taxon>
        <taxon>Gammaproteobacteria</taxon>
        <taxon>Vibrionales</taxon>
        <taxon>Vibrionaceae</taxon>
        <taxon>Vibrio</taxon>
    </lineage>
</organism>
<comment type="function">
    <text evidence="1">Regulates the transcription of several operons and genes involved in the biogenesis of Fe-S clusters and Fe-S-containing proteins.</text>
</comment>
<comment type="cofactor">
    <cofactor evidence="1">
        <name>[2Fe-2S] cluster</name>
        <dbReference type="ChEBI" id="CHEBI:190135"/>
    </cofactor>
    <text evidence="1">Binds 1 [2Fe-2S] cluster.</text>
</comment>
<feature type="chain" id="PRO_1000164419" description="HTH-type transcriptional regulator IscR">
    <location>
        <begin position="1"/>
        <end position="173"/>
    </location>
</feature>
<feature type="domain" description="HTH rrf2-type" evidence="1">
    <location>
        <begin position="2"/>
        <end position="131"/>
    </location>
</feature>
<feature type="DNA-binding region" description="H-T-H motif" evidence="1">
    <location>
        <begin position="28"/>
        <end position="51"/>
    </location>
</feature>
<feature type="binding site" evidence="1">
    <location>
        <position position="92"/>
    </location>
    <ligand>
        <name>[2Fe-2S] cluster</name>
        <dbReference type="ChEBI" id="CHEBI:190135"/>
    </ligand>
</feature>
<feature type="binding site" evidence="1">
    <location>
        <position position="98"/>
    </location>
    <ligand>
        <name>[2Fe-2S] cluster</name>
        <dbReference type="ChEBI" id="CHEBI:190135"/>
    </ligand>
</feature>
<feature type="binding site" evidence="1">
    <location>
        <position position="104"/>
    </location>
    <ligand>
        <name>[2Fe-2S] cluster</name>
        <dbReference type="ChEBI" id="CHEBI:190135"/>
    </ligand>
</feature>
<name>ISCR_VIBA3</name>
<proteinExistence type="inferred from homology"/>
<sequence length="173" mass="18427">MKLTSKGRYAVTAMLDVALHSQKSPVPLADISERQGISLSYLEQLFSKLRKAGLVASVRGPGGGYRLGAEASDIAVGTVIAAVDESVDATKCHGRADCQGGTRCLTHTLWRDLSSRISSFLNDITLGELMKDNEVLEISDRQDIDLAVNNGFAHKNTSTTTISAAPHGVNARS</sequence>
<accession>B7VJS5</accession>